<dbReference type="EC" id="6.3.4.4" evidence="1"/>
<dbReference type="EMBL" id="CP000673">
    <property type="protein sequence ID" value="EDK32164.1"/>
    <property type="molecule type" value="Genomic_DNA"/>
</dbReference>
<dbReference type="RefSeq" id="WP_011988690.1">
    <property type="nucleotide sequence ID" value="NC_009706.1"/>
</dbReference>
<dbReference type="SMR" id="A5N4D3"/>
<dbReference type="STRING" id="431943.CKL_0087"/>
<dbReference type="KEGG" id="ckl:CKL_0087"/>
<dbReference type="eggNOG" id="COG0104">
    <property type="taxonomic scope" value="Bacteria"/>
</dbReference>
<dbReference type="HOGENOM" id="CLU_029848_0_0_9"/>
<dbReference type="UniPathway" id="UPA00075">
    <property type="reaction ID" value="UER00335"/>
</dbReference>
<dbReference type="Proteomes" id="UP000002411">
    <property type="component" value="Chromosome"/>
</dbReference>
<dbReference type="GO" id="GO:0005737">
    <property type="term" value="C:cytoplasm"/>
    <property type="evidence" value="ECO:0007669"/>
    <property type="project" value="UniProtKB-SubCell"/>
</dbReference>
<dbReference type="GO" id="GO:0004019">
    <property type="term" value="F:adenylosuccinate synthase activity"/>
    <property type="evidence" value="ECO:0007669"/>
    <property type="project" value="UniProtKB-UniRule"/>
</dbReference>
<dbReference type="GO" id="GO:0005525">
    <property type="term" value="F:GTP binding"/>
    <property type="evidence" value="ECO:0007669"/>
    <property type="project" value="UniProtKB-UniRule"/>
</dbReference>
<dbReference type="GO" id="GO:0000287">
    <property type="term" value="F:magnesium ion binding"/>
    <property type="evidence" value="ECO:0007669"/>
    <property type="project" value="UniProtKB-UniRule"/>
</dbReference>
<dbReference type="GO" id="GO:0044208">
    <property type="term" value="P:'de novo' AMP biosynthetic process"/>
    <property type="evidence" value="ECO:0007669"/>
    <property type="project" value="UniProtKB-UniRule"/>
</dbReference>
<dbReference type="GO" id="GO:0046040">
    <property type="term" value="P:IMP metabolic process"/>
    <property type="evidence" value="ECO:0007669"/>
    <property type="project" value="TreeGrafter"/>
</dbReference>
<dbReference type="CDD" id="cd03108">
    <property type="entry name" value="AdSS"/>
    <property type="match status" value="1"/>
</dbReference>
<dbReference type="FunFam" id="1.10.300.10:FF:000001">
    <property type="entry name" value="Adenylosuccinate synthetase"/>
    <property type="match status" value="1"/>
</dbReference>
<dbReference type="FunFam" id="3.90.170.10:FF:000001">
    <property type="entry name" value="Adenylosuccinate synthetase"/>
    <property type="match status" value="1"/>
</dbReference>
<dbReference type="Gene3D" id="3.40.440.10">
    <property type="entry name" value="Adenylosuccinate Synthetase, subunit A, domain 1"/>
    <property type="match status" value="1"/>
</dbReference>
<dbReference type="Gene3D" id="1.10.300.10">
    <property type="entry name" value="Adenylosuccinate Synthetase, subunit A, domain 2"/>
    <property type="match status" value="1"/>
</dbReference>
<dbReference type="Gene3D" id="3.90.170.10">
    <property type="entry name" value="Adenylosuccinate Synthetase, subunit A, domain 3"/>
    <property type="match status" value="1"/>
</dbReference>
<dbReference type="HAMAP" id="MF_00011">
    <property type="entry name" value="Adenylosucc_synth"/>
    <property type="match status" value="1"/>
</dbReference>
<dbReference type="InterPro" id="IPR018220">
    <property type="entry name" value="Adenylosuccin_syn_GTP-bd"/>
</dbReference>
<dbReference type="InterPro" id="IPR033128">
    <property type="entry name" value="Adenylosuccin_syn_Lys_AS"/>
</dbReference>
<dbReference type="InterPro" id="IPR042109">
    <property type="entry name" value="Adenylosuccinate_synth_dom1"/>
</dbReference>
<dbReference type="InterPro" id="IPR042110">
    <property type="entry name" value="Adenylosuccinate_synth_dom2"/>
</dbReference>
<dbReference type="InterPro" id="IPR042111">
    <property type="entry name" value="Adenylosuccinate_synth_dom3"/>
</dbReference>
<dbReference type="InterPro" id="IPR001114">
    <property type="entry name" value="Adenylosuccinate_synthetase"/>
</dbReference>
<dbReference type="InterPro" id="IPR027417">
    <property type="entry name" value="P-loop_NTPase"/>
</dbReference>
<dbReference type="NCBIfam" id="NF002223">
    <property type="entry name" value="PRK01117.1"/>
    <property type="match status" value="1"/>
</dbReference>
<dbReference type="NCBIfam" id="TIGR00184">
    <property type="entry name" value="purA"/>
    <property type="match status" value="1"/>
</dbReference>
<dbReference type="PANTHER" id="PTHR11846">
    <property type="entry name" value="ADENYLOSUCCINATE SYNTHETASE"/>
    <property type="match status" value="1"/>
</dbReference>
<dbReference type="PANTHER" id="PTHR11846:SF0">
    <property type="entry name" value="ADENYLOSUCCINATE SYNTHETASE"/>
    <property type="match status" value="1"/>
</dbReference>
<dbReference type="Pfam" id="PF00709">
    <property type="entry name" value="Adenylsucc_synt"/>
    <property type="match status" value="1"/>
</dbReference>
<dbReference type="SMART" id="SM00788">
    <property type="entry name" value="Adenylsucc_synt"/>
    <property type="match status" value="1"/>
</dbReference>
<dbReference type="SUPFAM" id="SSF52540">
    <property type="entry name" value="P-loop containing nucleoside triphosphate hydrolases"/>
    <property type="match status" value="1"/>
</dbReference>
<dbReference type="PROSITE" id="PS01266">
    <property type="entry name" value="ADENYLOSUCCIN_SYN_1"/>
    <property type="match status" value="1"/>
</dbReference>
<dbReference type="PROSITE" id="PS00513">
    <property type="entry name" value="ADENYLOSUCCIN_SYN_2"/>
    <property type="match status" value="1"/>
</dbReference>
<accession>A5N4D3</accession>
<proteinExistence type="inferred from homology"/>
<name>PURA_CLOK5</name>
<sequence>MSAFIVLGSQWGDEGKGKMTDYLAKDVDVVVRFQGGNNAGHTVRVGDKEYKLHIIPSGILYKDKVNVIGNGVVLDPEALFQEIDYLEKAGVDIQPDNLMISDRAQLIMPYHKVLDGIKERSRGKKDIGTTGKGIGPCYTDKMERSGIRVCDLINQDVFKENLKENLKIKNDIITKVYGEEALDFDSICDQYIEYRKKLAPYVKDISVEVYNSIKNDKKVLFEGAQGTLLDIDYGTYPYVTSSSTIAGGVCIGAGIGPTLITGAIGVAKAYTTRVGKGPFPTELFDDTGDWIRKSGREYGVTTGRARRCGWLDLVILKTSSRVSGLTNFAITKIDTLGGLEKVKVCTGYKFNGKIIDYVPASLQDLAKCEPVYEEFDGWDKDIENAKTYDELPENAKIYLNKIEEFTNTKISIVSVGPGRDQTINLNNM</sequence>
<gene>
    <name evidence="1" type="primary">purA</name>
    <name type="ordered locus">CKL_0087</name>
</gene>
<keyword id="KW-0963">Cytoplasm</keyword>
<keyword id="KW-0342">GTP-binding</keyword>
<keyword id="KW-0436">Ligase</keyword>
<keyword id="KW-0460">Magnesium</keyword>
<keyword id="KW-0479">Metal-binding</keyword>
<keyword id="KW-0547">Nucleotide-binding</keyword>
<keyword id="KW-0658">Purine biosynthesis</keyword>
<keyword id="KW-1185">Reference proteome</keyword>
<feature type="chain" id="PRO_1000073942" description="Adenylosuccinate synthetase">
    <location>
        <begin position="1"/>
        <end position="428"/>
    </location>
</feature>
<feature type="active site" description="Proton acceptor" evidence="1">
    <location>
        <position position="13"/>
    </location>
</feature>
<feature type="active site" description="Proton donor" evidence="1">
    <location>
        <position position="41"/>
    </location>
</feature>
<feature type="binding site" evidence="1">
    <location>
        <begin position="12"/>
        <end position="18"/>
    </location>
    <ligand>
        <name>GTP</name>
        <dbReference type="ChEBI" id="CHEBI:37565"/>
    </ligand>
</feature>
<feature type="binding site" description="in other chain" evidence="1">
    <location>
        <begin position="13"/>
        <end position="16"/>
    </location>
    <ligand>
        <name>IMP</name>
        <dbReference type="ChEBI" id="CHEBI:58053"/>
        <note>ligand shared between dimeric partners</note>
    </ligand>
</feature>
<feature type="binding site" evidence="1">
    <location>
        <position position="13"/>
    </location>
    <ligand>
        <name>Mg(2+)</name>
        <dbReference type="ChEBI" id="CHEBI:18420"/>
    </ligand>
</feature>
<feature type="binding site" description="in other chain" evidence="1">
    <location>
        <begin position="38"/>
        <end position="41"/>
    </location>
    <ligand>
        <name>IMP</name>
        <dbReference type="ChEBI" id="CHEBI:58053"/>
        <note>ligand shared between dimeric partners</note>
    </ligand>
</feature>
<feature type="binding site" evidence="1">
    <location>
        <begin position="40"/>
        <end position="42"/>
    </location>
    <ligand>
        <name>GTP</name>
        <dbReference type="ChEBI" id="CHEBI:37565"/>
    </ligand>
</feature>
<feature type="binding site" evidence="1">
    <location>
        <position position="40"/>
    </location>
    <ligand>
        <name>Mg(2+)</name>
        <dbReference type="ChEBI" id="CHEBI:18420"/>
    </ligand>
</feature>
<feature type="binding site" description="in other chain" evidence="1">
    <location>
        <position position="130"/>
    </location>
    <ligand>
        <name>IMP</name>
        <dbReference type="ChEBI" id="CHEBI:58053"/>
        <note>ligand shared between dimeric partners</note>
    </ligand>
</feature>
<feature type="binding site" evidence="1">
    <location>
        <position position="144"/>
    </location>
    <ligand>
        <name>IMP</name>
        <dbReference type="ChEBI" id="CHEBI:58053"/>
        <note>ligand shared between dimeric partners</note>
    </ligand>
</feature>
<feature type="binding site" description="in other chain" evidence="1">
    <location>
        <position position="225"/>
    </location>
    <ligand>
        <name>IMP</name>
        <dbReference type="ChEBI" id="CHEBI:58053"/>
        <note>ligand shared between dimeric partners</note>
    </ligand>
</feature>
<feature type="binding site" description="in other chain" evidence="1">
    <location>
        <position position="240"/>
    </location>
    <ligand>
        <name>IMP</name>
        <dbReference type="ChEBI" id="CHEBI:58053"/>
        <note>ligand shared between dimeric partners</note>
    </ligand>
</feature>
<feature type="binding site" evidence="1">
    <location>
        <begin position="300"/>
        <end position="306"/>
    </location>
    <ligand>
        <name>substrate</name>
    </ligand>
</feature>
<feature type="binding site" description="in other chain" evidence="1">
    <location>
        <position position="304"/>
    </location>
    <ligand>
        <name>IMP</name>
        <dbReference type="ChEBI" id="CHEBI:58053"/>
        <note>ligand shared between dimeric partners</note>
    </ligand>
</feature>
<feature type="binding site" evidence="1">
    <location>
        <position position="306"/>
    </location>
    <ligand>
        <name>GTP</name>
        <dbReference type="ChEBI" id="CHEBI:37565"/>
    </ligand>
</feature>
<feature type="binding site" evidence="1">
    <location>
        <begin position="332"/>
        <end position="334"/>
    </location>
    <ligand>
        <name>GTP</name>
        <dbReference type="ChEBI" id="CHEBI:37565"/>
    </ligand>
</feature>
<feature type="binding site" evidence="1">
    <location>
        <begin position="414"/>
        <end position="416"/>
    </location>
    <ligand>
        <name>GTP</name>
        <dbReference type="ChEBI" id="CHEBI:37565"/>
    </ligand>
</feature>
<organism>
    <name type="scientific">Clostridium kluyveri (strain ATCC 8527 / DSM 555 / NBRC 12016 / NCIMB 10680 / K1)</name>
    <dbReference type="NCBI Taxonomy" id="431943"/>
    <lineage>
        <taxon>Bacteria</taxon>
        <taxon>Bacillati</taxon>
        <taxon>Bacillota</taxon>
        <taxon>Clostridia</taxon>
        <taxon>Eubacteriales</taxon>
        <taxon>Clostridiaceae</taxon>
        <taxon>Clostridium</taxon>
    </lineage>
</organism>
<evidence type="ECO:0000255" key="1">
    <source>
        <dbReference type="HAMAP-Rule" id="MF_00011"/>
    </source>
</evidence>
<reference key="1">
    <citation type="journal article" date="2008" name="Proc. Natl. Acad. Sci. U.S.A.">
        <title>The genome of Clostridium kluyveri, a strict anaerobe with unique metabolic features.</title>
        <authorList>
            <person name="Seedorf H."/>
            <person name="Fricke W.F."/>
            <person name="Veith B."/>
            <person name="Brueggemann H."/>
            <person name="Liesegang H."/>
            <person name="Strittmatter A."/>
            <person name="Miethke M."/>
            <person name="Buckel W."/>
            <person name="Hinderberger J."/>
            <person name="Li F."/>
            <person name="Hagemeier C."/>
            <person name="Thauer R.K."/>
            <person name="Gottschalk G."/>
        </authorList>
    </citation>
    <scope>NUCLEOTIDE SEQUENCE [LARGE SCALE GENOMIC DNA]</scope>
    <source>
        <strain>ATCC 8527 / DSM 555 / NBRC 12016 / NCIMB 10680 / K1</strain>
    </source>
</reference>
<protein>
    <recommendedName>
        <fullName evidence="1">Adenylosuccinate synthetase</fullName>
        <shortName evidence="1">AMPSase</shortName>
        <shortName evidence="1">AdSS</shortName>
        <ecNumber evidence="1">6.3.4.4</ecNumber>
    </recommendedName>
    <alternativeName>
        <fullName evidence="1">IMP--aspartate ligase</fullName>
    </alternativeName>
</protein>
<comment type="function">
    <text evidence="1">Plays an important role in the de novo pathway of purine nucleotide biosynthesis. Catalyzes the first committed step in the biosynthesis of AMP from IMP.</text>
</comment>
<comment type="catalytic activity">
    <reaction evidence="1">
        <text>IMP + L-aspartate + GTP = N(6)-(1,2-dicarboxyethyl)-AMP + GDP + phosphate + 2 H(+)</text>
        <dbReference type="Rhea" id="RHEA:15753"/>
        <dbReference type="ChEBI" id="CHEBI:15378"/>
        <dbReference type="ChEBI" id="CHEBI:29991"/>
        <dbReference type="ChEBI" id="CHEBI:37565"/>
        <dbReference type="ChEBI" id="CHEBI:43474"/>
        <dbReference type="ChEBI" id="CHEBI:57567"/>
        <dbReference type="ChEBI" id="CHEBI:58053"/>
        <dbReference type="ChEBI" id="CHEBI:58189"/>
        <dbReference type="EC" id="6.3.4.4"/>
    </reaction>
</comment>
<comment type="cofactor">
    <cofactor evidence="1">
        <name>Mg(2+)</name>
        <dbReference type="ChEBI" id="CHEBI:18420"/>
    </cofactor>
    <text evidence="1">Binds 1 Mg(2+) ion per subunit.</text>
</comment>
<comment type="pathway">
    <text evidence="1">Purine metabolism; AMP biosynthesis via de novo pathway; AMP from IMP: step 1/2.</text>
</comment>
<comment type="subunit">
    <text evidence="1">Homodimer.</text>
</comment>
<comment type="subcellular location">
    <subcellularLocation>
        <location evidence="1">Cytoplasm</location>
    </subcellularLocation>
</comment>
<comment type="similarity">
    <text evidence="1">Belongs to the adenylosuccinate synthetase family.</text>
</comment>